<organism>
    <name type="scientific">Morus indica</name>
    <name type="common">Mulberry</name>
    <dbReference type="NCBI Taxonomy" id="248361"/>
    <lineage>
        <taxon>Eukaryota</taxon>
        <taxon>Viridiplantae</taxon>
        <taxon>Streptophyta</taxon>
        <taxon>Embryophyta</taxon>
        <taxon>Tracheophyta</taxon>
        <taxon>Spermatophyta</taxon>
        <taxon>Magnoliopsida</taxon>
        <taxon>eudicotyledons</taxon>
        <taxon>Gunneridae</taxon>
        <taxon>Pentapetalae</taxon>
        <taxon>rosids</taxon>
        <taxon>fabids</taxon>
        <taxon>Rosales</taxon>
        <taxon>Moraceae</taxon>
        <taxon>Moreae</taxon>
        <taxon>Morus</taxon>
    </lineage>
</organism>
<protein>
    <recommendedName>
        <fullName evidence="1">NAD(P)H-quinone oxidoreductase subunit H, chloroplastic</fullName>
        <ecNumber evidence="1">7.1.1.-</ecNumber>
    </recommendedName>
    <alternativeName>
        <fullName>NAD(P)H dehydrogenase subunit H</fullName>
    </alternativeName>
    <alternativeName>
        <fullName evidence="1">NADH-plastoquinone oxidoreductase 49 kDa subunit</fullName>
    </alternativeName>
    <alternativeName>
        <fullName evidence="1">NADH-plastoquinone oxidoreductase subunit H</fullName>
    </alternativeName>
</protein>
<reference key="1">
    <citation type="submission" date="2005-09" db="EMBL/GenBank/DDBJ databases">
        <title>The chloroplast genome of mulberry: structural features and comparative analysis.</title>
        <authorList>
            <person name="Ravi V."/>
            <person name="Khurana J.P."/>
            <person name="Tyagi A.K."/>
            <person name="Khurana P."/>
        </authorList>
    </citation>
    <scope>NUCLEOTIDE SEQUENCE [LARGE SCALE GENOMIC DNA]</scope>
    <source>
        <strain>cv. K2</strain>
    </source>
</reference>
<comment type="function">
    <text evidence="1">NDH shuttles electrons from NAD(P)H:plastoquinone, via FMN and iron-sulfur (Fe-S) centers, to quinones in the photosynthetic chain and possibly in a chloroplast respiratory chain. The immediate electron acceptor for the enzyme in this species is believed to be plastoquinone. Couples the redox reaction to proton translocation, and thus conserves the redox energy in a proton gradient.</text>
</comment>
<comment type="catalytic activity">
    <reaction evidence="1">
        <text>a plastoquinone + NADH + (n+1) H(+)(in) = a plastoquinol + NAD(+) + n H(+)(out)</text>
        <dbReference type="Rhea" id="RHEA:42608"/>
        <dbReference type="Rhea" id="RHEA-COMP:9561"/>
        <dbReference type="Rhea" id="RHEA-COMP:9562"/>
        <dbReference type="ChEBI" id="CHEBI:15378"/>
        <dbReference type="ChEBI" id="CHEBI:17757"/>
        <dbReference type="ChEBI" id="CHEBI:57540"/>
        <dbReference type="ChEBI" id="CHEBI:57945"/>
        <dbReference type="ChEBI" id="CHEBI:62192"/>
    </reaction>
</comment>
<comment type="catalytic activity">
    <reaction evidence="1">
        <text>a plastoquinone + NADPH + (n+1) H(+)(in) = a plastoquinol + NADP(+) + n H(+)(out)</text>
        <dbReference type="Rhea" id="RHEA:42612"/>
        <dbReference type="Rhea" id="RHEA-COMP:9561"/>
        <dbReference type="Rhea" id="RHEA-COMP:9562"/>
        <dbReference type="ChEBI" id="CHEBI:15378"/>
        <dbReference type="ChEBI" id="CHEBI:17757"/>
        <dbReference type="ChEBI" id="CHEBI:57783"/>
        <dbReference type="ChEBI" id="CHEBI:58349"/>
        <dbReference type="ChEBI" id="CHEBI:62192"/>
    </reaction>
</comment>
<comment type="subunit">
    <text evidence="1">NDH is composed of at least 16 different subunits, 5 of which are encoded in the nucleus.</text>
</comment>
<comment type="subcellular location">
    <subcellularLocation>
        <location evidence="1">Plastid</location>
        <location evidence="1">Chloroplast thylakoid membrane</location>
        <topology evidence="1">Peripheral membrane protein</topology>
        <orientation evidence="1">Stromal side</orientation>
    </subcellularLocation>
</comment>
<comment type="similarity">
    <text evidence="1">Belongs to the complex I 49 kDa subunit family.</text>
</comment>
<gene>
    <name evidence="1" type="primary">ndhH</name>
    <name type="ordered locus">MoinCp077</name>
</gene>
<evidence type="ECO:0000255" key="1">
    <source>
        <dbReference type="HAMAP-Rule" id="MF_01358"/>
    </source>
</evidence>
<feature type="chain" id="PRO_0000358005" description="NAD(P)H-quinone oxidoreductase subunit H, chloroplastic">
    <location>
        <begin position="1"/>
        <end position="393"/>
    </location>
</feature>
<keyword id="KW-0150">Chloroplast</keyword>
<keyword id="KW-0472">Membrane</keyword>
<keyword id="KW-0520">NAD</keyword>
<keyword id="KW-0521">NADP</keyword>
<keyword id="KW-0934">Plastid</keyword>
<keyword id="KW-0618">Plastoquinone</keyword>
<keyword id="KW-0874">Quinone</keyword>
<keyword id="KW-0793">Thylakoid</keyword>
<keyword id="KW-1278">Translocase</keyword>
<keyword id="KW-0813">Transport</keyword>
<accession>Q09WW2</accession>
<dbReference type="EC" id="7.1.1.-" evidence="1"/>
<dbReference type="EMBL" id="DQ226511">
    <property type="protein sequence ID" value="ABB21012.1"/>
    <property type="molecule type" value="Genomic_DNA"/>
</dbReference>
<dbReference type="RefSeq" id="YP_762316.1">
    <property type="nucleotide sequence ID" value="NC_008359.1"/>
</dbReference>
<dbReference type="SMR" id="Q09WW2"/>
<dbReference type="GeneID" id="4290613"/>
<dbReference type="GO" id="GO:0009535">
    <property type="term" value="C:chloroplast thylakoid membrane"/>
    <property type="evidence" value="ECO:0007669"/>
    <property type="project" value="UniProtKB-SubCell"/>
</dbReference>
<dbReference type="GO" id="GO:0051287">
    <property type="term" value="F:NAD binding"/>
    <property type="evidence" value="ECO:0007669"/>
    <property type="project" value="InterPro"/>
</dbReference>
<dbReference type="GO" id="GO:0016655">
    <property type="term" value="F:oxidoreductase activity, acting on NAD(P)H, quinone or similar compound as acceptor"/>
    <property type="evidence" value="ECO:0007669"/>
    <property type="project" value="UniProtKB-UniRule"/>
</dbReference>
<dbReference type="GO" id="GO:0048038">
    <property type="term" value="F:quinone binding"/>
    <property type="evidence" value="ECO:0007669"/>
    <property type="project" value="UniProtKB-KW"/>
</dbReference>
<dbReference type="GO" id="GO:0019684">
    <property type="term" value="P:photosynthesis, light reaction"/>
    <property type="evidence" value="ECO:0007669"/>
    <property type="project" value="UniProtKB-UniRule"/>
</dbReference>
<dbReference type="FunFam" id="1.10.645.10:FF:000003">
    <property type="entry name" value="NAD(P)H-quinone oxidoreductase subunit H, chloroplastic"/>
    <property type="match status" value="1"/>
</dbReference>
<dbReference type="Gene3D" id="1.10.645.10">
    <property type="entry name" value="Cytochrome-c3 Hydrogenase, chain B"/>
    <property type="match status" value="1"/>
</dbReference>
<dbReference type="HAMAP" id="MF_01358">
    <property type="entry name" value="NDH1_NuoD"/>
    <property type="match status" value="1"/>
</dbReference>
<dbReference type="InterPro" id="IPR001135">
    <property type="entry name" value="NADH_Q_OxRdtase_suD"/>
</dbReference>
<dbReference type="InterPro" id="IPR014029">
    <property type="entry name" value="NADH_UbQ_OxRdtase_49kDa_CS"/>
</dbReference>
<dbReference type="InterPro" id="IPR022885">
    <property type="entry name" value="NDH1_su_D/H"/>
</dbReference>
<dbReference type="InterPro" id="IPR029014">
    <property type="entry name" value="NiFe-Hase_large"/>
</dbReference>
<dbReference type="NCBIfam" id="NF004739">
    <property type="entry name" value="PRK06075.1"/>
    <property type="match status" value="1"/>
</dbReference>
<dbReference type="NCBIfam" id="NF005649">
    <property type="entry name" value="PRK07415.1"/>
    <property type="match status" value="1"/>
</dbReference>
<dbReference type="PANTHER" id="PTHR11993:SF10">
    <property type="entry name" value="NADH DEHYDROGENASE [UBIQUINONE] IRON-SULFUR PROTEIN 2, MITOCHONDRIAL"/>
    <property type="match status" value="1"/>
</dbReference>
<dbReference type="PANTHER" id="PTHR11993">
    <property type="entry name" value="NADH-UBIQUINONE OXIDOREDUCTASE 49 KDA SUBUNIT"/>
    <property type="match status" value="1"/>
</dbReference>
<dbReference type="Pfam" id="PF00346">
    <property type="entry name" value="Complex1_49kDa"/>
    <property type="match status" value="1"/>
</dbReference>
<dbReference type="SUPFAM" id="SSF56762">
    <property type="entry name" value="HydB/Nqo4-like"/>
    <property type="match status" value="1"/>
</dbReference>
<dbReference type="PROSITE" id="PS00535">
    <property type="entry name" value="COMPLEX1_49K"/>
    <property type="match status" value="1"/>
</dbReference>
<sequence>MNIPAPRKDLMIVNMGPHHPSMHGVLRLIVTLDGEDVIDCEPILGYLHRGMEKIAENRTIIQYLPYVTRWDYLATMFTEAITINGPELLGNIQVPKRASYIRAIMLELSRIASHLLWLGPFLADIGAQTPFFYIFRERELVYDLFEAATGMRMMHNFFRIGGVAADLPHGWIDKCLDFCDYFLIGVTEYQKLITRNPIFLERVEGVGVIGREEVINWGLSGPMLRASGIQWDLRKVDHYECYDEFDWEVQWQKEGDSLARYLVRIGEMTESIKIIQQALEGIPGGPYENLEIRYFDRERNPEWNDFDYRFISKKPSPTFELPKQELYVRVEAPKGELGIFLIGDQSGFPWRWKIRPPGFINLQILPQLVKRMKLADIMTILGSIDIIMGEVDR</sequence>
<proteinExistence type="inferred from homology"/>
<geneLocation type="chloroplast"/>
<name>NDHH_MORIN</name>